<protein>
    <recommendedName>
        <fullName evidence="1">UDP-N-acetylmuramate--L-alanine ligase</fullName>
        <ecNumber evidence="1">6.3.2.8</ecNumber>
    </recommendedName>
    <alternativeName>
        <fullName evidence="1">UDP-N-acetylmuramoyl-L-alanine synthetase</fullName>
    </alternativeName>
</protein>
<comment type="function">
    <text evidence="1">Cell wall formation.</text>
</comment>
<comment type="catalytic activity">
    <reaction evidence="1">
        <text>UDP-N-acetyl-alpha-D-muramate + L-alanine + ATP = UDP-N-acetyl-alpha-D-muramoyl-L-alanine + ADP + phosphate + H(+)</text>
        <dbReference type="Rhea" id="RHEA:23372"/>
        <dbReference type="ChEBI" id="CHEBI:15378"/>
        <dbReference type="ChEBI" id="CHEBI:30616"/>
        <dbReference type="ChEBI" id="CHEBI:43474"/>
        <dbReference type="ChEBI" id="CHEBI:57972"/>
        <dbReference type="ChEBI" id="CHEBI:70757"/>
        <dbReference type="ChEBI" id="CHEBI:83898"/>
        <dbReference type="ChEBI" id="CHEBI:456216"/>
        <dbReference type="EC" id="6.3.2.8"/>
    </reaction>
</comment>
<comment type="pathway">
    <text evidence="1">Cell wall biogenesis; peptidoglycan biosynthesis.</text>
</comment>
<comment type="subcellular location">
    <subcellularLocation>
        <location evidence="1">Cytoplasm</location>
    </subcellularLocation>
</comment>
<comment type="similarity">
    <text evidence="1">Belongs to the MurCDEF family.</text>
</comment>
<name>MURC_RHOPB</name>
<accession>Q211T9</accession>
<evidence type="ECO:0000255" key="1">
    <source>
        <dbReference type="HAMAP-Rule" id="MF_00046"/>
    </source>
</evidence>
<reference key="1">
    <citation type="submission" date="2006-03" db="EMBL/GenBank/DDBJ databases">
        <title>Complete sequence of Rhodopseudomonas palustris BisB18.</title>
        <authorList>
            <consortium name="US DOE Joint Genome Institute"/>
            <person name="Copeland A."/>
            <person name="Lucas S."/>
            <person name="Lapidus A."/>
            <person name="Barry K."/>
            <person name="Detter J.C."/>
            <person name="Glavina del Rio T."/>
            <person name="Hammon N."/>
            <person name="Israni S."/>
            <person name="Dalin E."/>
            <person name="Tice H."/>
            <person name="Pitluck S."/>
            <person name="Chain P."/>
            <person name="Malfatti S."/>
            <person name="Shin M."/>
            <person name="Vergez L."/>
            <person name="Schmutz J."/>
            <person name="Larimer F."/>
            <person name="Land M."/>
            <person name="Hauser L."/>
            <person name="Pelletier D.A."/>
            <person name="Kyrpides N."/>
            <person name="Anderson I."/>
            <person name="Oda Y."/>
            <person name="Harwood C.S."/>
            <person name="Richardson P."/>
        </authorList>
    </citation>
    <scope>NUCLEOTIDE SEQUENCE [LARGE SCALE GENOMIC DNA]</scope>
    <source>
        <strain>BisB18</strain>
    </source>
</reference>
<organism>
    <name type="scientific">Rhodopseudomonas palustris (strain BisB18)</name>
    <dbReference type="NCBI Taxonomy" id="316056"/>
    <lineage>
        <taxon>Bacteria</taxon>
        <taxon>Pseudomonadati</taxon>
        <taxon>Pseudomonadota</taxon>
        <taxon>Alphaproteobacteria</taxon>
        <taxon>Hyphomicrobiales</taxon>
        <taxon>Nitrobacteraceae</taxon>
        <taxon>Rhodopseudomonas</taxon>
    </lineage>
</organism>
<feature type="chain" id="PRO_0000242586" description="UDP-N-acetylmuramate--L-alanine ligase">
    <location>
        <begin position="1"/>
        <end position="467"/>
    </location>
</feature>
<feature type="binding site" evidence="1">
    <location>
        <begin position="114"/>
        <end position="120"/>
    </location>
    <ligand>
        <name>ATP</name>
        <dbReference type="ChEBI" id="CHEBI:30616"/>
    </ligand>
</feature>
<keyword id="KW-0067">ATP-binding</keyword>
<keyword id="KW-0131">Cell cycle</keyword>
<keyword id="KW-0132">Cell division</keyword>
<keyword id="KW-0133">Cell shape</keyword>
<keyword id="KW-0961">Cell wall biogenesis/degradation</keyword>
<keyword id="KW-0963">Cytoplasm</keyword>
<keyword id="KW-0436">Ligase</keyword>
<keyword id="KW-0547">Nucleotide-binding</keyword>
<keyword id="KW-0573">Peptidoglycan synthesis</keyword>
<sequence length="467" mass="49974">MRLPREIGPIHFVGIGGIGMSGIAEVLCNLGYTVQGSDASEGANVSRLRDKGIAIHVGHQAENVAGADVVVVSTAIKRDNPELLAARAQRIPVVRRAEMLAELMRLKSCVAIAGTHGKTTTTSMVAALLDAGEFDPTVINGGIINAYGTNARLGAGEWMVVEADESDGTFLKLPADVAIVTNVDPEHLDHFKTFDAVQEAFRDFVENVPFYGFAVMCIDHPVVQALVGKIEDRRIITYGENPQADVRLLDLTPNGGSSAFRVAFRDRKAGTAHEIADLVLPMPGRHNALNATAAIAVAHELGLSDDTIRKALAGFGGVRRRFTKTGEWNGVTIIDDYGHHPVEIAAVLKAARESTKGKVIAVVQPHRFTRLQSLFEEFCTCFNDADVVVVAEVYPAGEAPIEGVDRDHFVLGLRAHGHREVIPLQESAALASVVYGAAHSGDYVVCLGAGNITQWAYALPGELKALD</sequence>
<dbReference type="EC" id="6.3.2.8" evidence="1"/>
<dbReference type="EMBL" id="CP000301">
    <property type="protein sequence ID" value="ABD88847.1"/>
    <property type="molecule type" value="Genomic_DNA"/>
</dbReference>
<dbReference type="SMR" id="Q211T9"/>
<dbReference type="STRING" id="316056.RPC_3305"/>
<dbReference type="KEGG" id="rpc:RPC_3305"/>
<dbReference type="eggNOG" id="COG0773">
    <property type="taxonomic scope" value="Bacteria"/>
</dbReference>
<dbReference type="HOGENOM" id="CLU_028104_2_2_5"/>
<dbReference type="OrthoDB" id="9804126at2"/>
<dbReference type="UniPathway" id="UPA00219"/>
<dbReference type="GO" id="GO:0005737">
    <property type="term" value="C:cytoplasm"/>
    <property type="evidence" value="ECO:0007669"/>
    <property type="project" value="UniProtKB-SubCell"/>
</dbReference>
<dbReference type="GO" id="GO:0005524">
    <property type="term" value="F:ATP binding"/>
    <property type="evidence" value="ECO:0007669"/>
    <property type="project" value="UniProtKB-UniRule"/>
</dbReference>
<dbReference type="GO" id="GO:0008763">
    <property type="term" value="F:UDP-N-acetylmuramate-L-alanine ligase activity"/>
    <property type="evidence" value="ECO:0007669"/>
    <property type="project" value="UniProtKB-UniRule"/>
</dbReference>
<dbReference type="GO" id="GO:0051301">
    <property type="term" value="P:cell division"/>
    <property type="evidence" value="ECO:0007669"/>
    <property type="project" value="UniProtKB-KW"/>
</dbReference>
<dbReference type="GO" id="GO:0071555">
    <property type="term" value="P:cell wall organization"/>
    <property type="evidence" value="ECO:0007669"/>
    <property type="project" value="UniProtKB-KW"/>
</dbReference>
<dbReference type="GO" id="GO:0009252">
    <property type="term" value="P:peptidoglycan biosynthetic process"/>
    <property type="evidence" value="ECO:0007669"/>
    <property type="project" value="UniProtKB-UniRule"/>
</dbReference>
<dbReference type="GO" id="GO:0008360">
    <property type="term" value="P:regulation of cell shape"/>
    <property type="evidence" value="ECO:0007669"/>
    <property type="project" value="UniProtKB-KW"/>
</dbReference>
<dbReference type="Gene3D" id="3.90.190.20">
    <property type="entry name" value="Mur ligase, C-terminal domain"/>
    <property type="match status" value="1"/>
</dbReference>
<dbReference type="Gene3D" id="3.40.1190.10">
    <property type="entry name" value="Mur-like, catalytic domain"/>
    <property type="match status" value="1"/>
</dbReference>
<dbReference type="Gene3D" id="3.40.50.720">
    <property type="entry name" value="NAD(P)-binding Rossmann-like Domain"/>
    <property type="match status" value="1"/>
</dbReference>
<dbReference type="HAMAP" id="MF_00046">
    <property type="entry name" value="MurC"/>
    <property type="match status" value="1"/>
</dbReference>
<dbReference type="InterPro" id="IPR036565">
    <property type="entry name" value="Mur-like_cat_sf"/>
</dbReference>
<dbReference type="InterPro" id="IPR004101">
    <property type="entry name" value="Mur_ligase_C"/>
</dbReference>
<dbReference type="InterPro" id="IPR036615">
    <property type="entry name" value="Mur_ligase_C_dom_sf"/>
</dbReference>
<dbReference type="InterPro" id="IPR013221">
    <property type="entry name" value="Mur_ligase_cen"/>
</dbReference>
<dbReference type="InterPro" id="IPR000713">
    <property type="entry name" value="Mur_ligase_N"/>
</dbReference>
<dbReference type="InterPro" id="IPR050061">
    <property type="entry name" value="MurCDEF_pg_biosynth"/>
</dbReference>
<dbReference type="InterPro" id="IPR005758">
    <property type="entry name" value="UDP-N-AcMur_Ala_ligase_MurC"/>
</dbReference>
<dbReference type="NCBIfam" id="TIGR01082">
    <property type="entry name" value="murC"/>
    <property type="match status" value="1"/>
</dbReference>
<dbReference type="PANTHER" id="PTHR43445:SF3">
    <property type="entry name" value="UDP-N-ACETYLMURAMATE--L-ALANINE LIGASE"/>
    <property type="match status" value="1"/>
</dbReference>
<dbReference type="PANTHER" id="PTHR43445">
    <property type="entry name" value="UDP-N-ACETYLMURAMATE--L-ALANINE LIGASE-RELATED"/>
    <property type="match status" value="1"/>
</dbReference>
<dbReference type="Pfam" id="PF01225">
    <property type="entry name" value="Mur_ligase"/>
    <property type="match status" value="1"/>
</dbReference>
<dbReference type="Pfam" id="PF02875">
    <property type="entry name" value="Mur_ligase_C"/>
    <property type="match status" value="1"/>
</dbReference>
<dbReference type="Pfam" id="PF08245">
    <property type="entry name" value="Mur_ligase_M"/>
    <property type="match status" value="1"/>
</dbReference>
<dbReference type="SUPFAM" id="SSF51984">
    <property type="entry name" value="MurCD N-terminal domain"/>
    <property type="match status" value="1"/>
</dbReference>
<dbReference type="SUPFAM" id="SSF53623">
    <property type="entry name" value="MurD-like peptide ligases, catalytic domain"/>
    <property type="match status" value="1"/>
</dbReference>
<dbReference type="SUPFAM" id="SSF53244">
    <property type="entry name" value="MurD-like peptide ligases, peptide-binding domain"/>
    <property type="match status" value="1"/>
</dbReference>
<gene>
    <name evidence="1" type="primary">murC</name>
    <name type="ordered locus">RPC_3305</name>
</gene>
<proteinExistence type="inferred from homology"/>